<organism>
    <name type="scientific">Bordetella petrii (strain ATCC BAA-461 / DSM 12804 / CCUG 43448)</name>
    <dbReference type="NCBI Taxonomy" id="340100"/>
    <lineage>
        <taxon>Bacteria</taxon>
        <taxon>Pseudomonadati</taxon>
        <taxon>Pseudomonadota</taxon>
        <taxon>Betaproteobacteria</taxon>
        <taxon>Burkholderiales</taxon>
        <taxon>Alcaligenaceae</taxon>
        <taxon>Bordetella</taxon>
    </lineage>
</organism>
<comment type="subcellular location">
    <subcellularLocation>
        <location evidence="1">Bacterial flagellum basal body</location>
    </subcellularLocation>
</comment>
<comment type="similarity">
    <text evidence="1">Belongs to the FliE family.</text>
</comment>
<proteinExistence type="inferred from homology"/>
<feature type="chain" id="PRO_1000132649" description="Flagellar hook-basal body complex protein FliE">
    <location>
        <begin position="1"/>
        <end position="110"/>
    </location>
</feature>
<accession>A9IKU8</accession>
<sequence>MAVSGLSGIESMLQQMRAVVQAAQSNGVSPAELAPQPASFAAELQRSLQRVSAAQIAATNQGKAYELGAPGVSLNDVMIDLQKSSIAFQTAVQVRNRLVAAYKEISAMSV</sequence>
<protein>
    <recommendedName>
        <fullName evidence="1">Flagellar hook-basal body complex protein FliE</fullName>
    </recommendedName>
</protein>
<gene>
    <name evidence="1" type="primary">fliE</name>
    <name type="ordered locus">Bpet2148</name>
</gene>
<name>FLIE_BORPD</name>
<evidence type="ECO:0000255" key="1">
    <source>
        <dbReference type="HAMAP-Rule" id="MF_00724"/>
    </source>
</evidence>
<dbReference type="EMBL" id="AM902716">
    <property type="protein sequence ID" value="CAP42489.1"/>
    <property type="molecule type" value="Genomic_DNA"/>
</dbReference>
<dbReference type="SMR" id="A9IKU8"/>
<dbReference type="STRING" id="94624.Bpet2148"/>
<dbReference type="KEGG" id="bpt:Bpet2148"/>
<dbReference type="eggNOG" id="COG1677">
    <property type="taxonomic scope" value="Bacteria"/>
</dbReference>
<dbReference type="Proteomes" id="UP000001225">
    <property type="component" value="Chromosome"/>
</dbReference>
<dbReference type="GO" id="GO:0009425">
    <property type="term" value="C:bacterial-type flagellum basal body"/>
    <property type="evidence" value="ECO:0007669"/>
    <property type="project" value="UniProtKB-SubCell"/>
</dbReference>
<dbReference type="GO" id="GO:0003774">
    <property type="term" value="F:cytoskeletal motor activity"/>
    <property type="evidence" value="ECO:0007669"/>
    <property type="project" value="InterPro"/>
</dbReference>
<dbReference type="GO" id="GO:0005198">
    <property type="term" value="F:structural molecule activity"/>
    <property type="evidence" value="ECO:0007669"/>
    <property type="project" value="InterPro"/>
</dbReference>
<dbReference type="GO" id="GO:0071973">
    <property type="term" value="P:bacterial-type flagellum-dependent cell motility"/>
    <property type="evidence" value="ECO:0007669"/>
    <property type="project" value="InterPro"/>
</dbReference>
<dbReference type="HAMAP" id="MF_00724">
    <property type="entry name" value="FliE"/>
    <property type="match status" value="1"/>
</dbReference>
<dbReference type="InterPro" id="IPR001624">
    <property type="entry name" value="FliE"/>
</dbReference>
<dbReference type="NCBIfam" id="TIGR00205">
    <property type="entry name" value="fliE"/>
    <property type="match status" value="1"/>
</dbReference>
<dbReference type="PANTHER" id="PTHR34653">
    <property type="match status" value="1"/>
</dbReference>
<dbReference type="PANTHER" id="PTHR34653:SF1">
    <property type="entry name" value="FLAGELLAR HOOK-BASAL BODY COMPLEX PROTEIN FLIE"/>
    <property type="match status" value="1"/>
</dbReference>
<dbReference type="Pfam" id="PF02049">
    <property type="entry name" value="FliE"/>
    <property type="match status" value="1"/>
</dbReference>
<dbReference type="PRINTS" id="PR01006">
    <property type="entry name" value="FLGHOOKFLIE"/>
</dbReference>
<keyword id="KW-0975">Bacterial flagellum</keyword>
<reference key="1">
    <citation type="journal article" date="2008" name="BMC Genomics">
        <title>The missing link: Bordetella petrii is endowed with both the metabolic versatility of environmental bacteria and virulence traits of pathogenic Bordetellae.</title>
        <authorList>
            <person name="Gross R."/>
            <person name="Guzman C.A."/>
            <person name="Sebaihia M."/>
            <person name="Martin dos Santos V.A.P."/>
            <person name="Pieper D.H."/>
            <person name="Koebnik R."/>
            <person name="Lechner M."/>
            <person name="Bartels D."/>
            <person name="Buhrmester J."/>
            <person name="Choudhuri J.V."/>
            <person name="Ebensen T."/>
            <person name="Gaigalat L."/>
            <person name="Herrmann S."/>
            <person name="Khachane A.N."/>
            <person name="Larisch C."/>
            <person name="Link S."/>
            <person name="Linke B."/>
            <person name="Meyer F."/>
            <person name="Mormann S."/>
            <person name="Nakunst D."/>
            <person name="Rueckert C."/>
            <person name="Schneiker-Bekel S."/>
            <person name="Schulze K."/>
            <person name="Voerholter F.-J."/>
            <person name="Yevsa T."/>
            <person name="Engle J.T."/>
            <person name="Goldman W.E."/>
            <person name="Puehler A."/>
            <person name="Goebel U.B."/>
            <person name="Goesmann A."/>
            <person name="Bloecker H."/>
            <person name="Kaiser O."/>
            <person name="Martinez-Arias R."/>
        </authorList>
    </citation>
    <scope>NUCLEOTIDE SEQUENCE [LARGE SCALE GENOMIC DNA]</scope>
    <source>
        <strain>ATCC BAA-461 / DSM 12804 / CCUG 43448</strain>
    </source>
</reference>